<proteinExistence type="inferred from homology"/>
<protein>
    <recommendedName>
        <fullName evidence="1">UPF0145 protein</fullName>
    </recommendedName>
</protein>
<dbReference type="EMBL" id="AJ249808">
    <property type="protein sequence ID" value="CAC80668.1"/>
    <property type="molecule type" value="Genomic_DNA"/>
</dbReference>
<dbReference type="EMBL" id="AF322005">
    <property type="protein sequence ID" value="AAL36606.1"/>
    <property type="molecule type" value="Genomic_DNA"/>
</dbReference>
<dbReference type="RefSeq" id="WP_011701036.1">
    <property type="nucleotide sequence ID" value="NZ_NYPG01000004.1"/>
</dbReference>
<dbReference type="SMR" id="Q8VL64"/>
<dbReference type="GeneID" id="61188050"/>
<dbReference type="OMA" id="SGEAIMG"/>
<dbReference type="Gene3D" id="3.30.110.70">
    <property type="entry name" value="Hypothetical protein apc22750. Chain B"/>
    <property type="match status" value="1"/>
</dbReference>
<dbReference type="HAMAP" id="MF_00338">
    <property type="entry name" value="UPF0145"/>
    <property type="match status" value="1"/>
</dbReference>
<dbReference type="InterPro" id="IPR035439">
    <property type="entry name" value="UPF0145_dom_sf"/>
</dbReference>
<dbReference type="InterPro" id="IPR002765">
    <property type="entry name" value="UPF0145_YbjQ-like"/>
</dbReference>
<dbReference type="NCBIfam" id="NF002224">
    <property type="entry name" value="PRK01119.1"/>
    <property type="match status" value="1"/>
</dbReference>
<dbReference type="PANTHER" id="PTHR34068">
    <property type="entry name" value="UPF0145 PROTEIN YBJQ"/>
    <property type="match status" value="1"/>
</dbReference>
<dbReference type="PANTHER" id="PTHR34068:SF1">
    <property type="entry name" value="UPF0145 PROTEIN YBJQ"/>
    <property type="match status" value="1"/>
</dbReference>
<dbReference type="Pfam" id="PF01906">
    <property type="entry name" value="YbjQ_1"/>
    <property type="match status" value="1"/>
</dbReference>
<dbReference type="SUPFAM" id="SSF117782">
    <property type="entry name" value="YbjQ-like"/>
    <property type="match status" value="1"/>
</dbReference>
<accession>Q8VL64</accession>
<sequence length="110" mass="11979">MIVTTSPNIEGKQIIEYKKIVFGEVITGVNFMKDIGAGLRNFFGGRSQGYEDELINAREEAIREMESRAKDIGANAVIGVDIDYEVLGADNGMLMVTASGTAVVIEVQDY</sequence>
<reference key="1">
    <citation type="submission" date="1999-09" db="EMBL/GenBank/DDBJ databases">
        <title>The evolution of virulence determinants in the Listeria genus.</title>
        <authorList>
            <person name="Ng E.Y."/>
            <person name="Goebel W."/>
        </authorList>
    </citation>
    <scope>NUCLEOTIDE SEQUENCE [GENOMIC DNA]</scope>
</reference>
<reference key="2">
    <citation type="journal article" date="2001" name="Curr. Microbiol.">
        <title>Characterization of the prfA virulence gene cluster insertion site in non-hemolytic Listeria spp.: probing the evolution of the Listeria virulence gene island.</title>
        <authorList>
            <person name="Cai S."/>
            <person name="Wiedmann M."/>
        </authorList>
    </citation>
    <scope>NUCLEOTIDE SEQUENCE [GENOMIC DNA]</scope>
    <source>
        <strain>CF3VP</strain>
    </source>
</reference>
<evidence type="ECO:0000255" key="1">
    <source>
        <dbReference type="HAMAP-Rule" id="MF_00338"/>
    </source>
</evidence>
<organism>
    <name type="scientific">Listeria welshimeri</name>
    <dbReference type="NCBI Taxonomy" id="1643"/>
    <lineage>
        <taxon>Bacteria</taxon>
        <taxon>Bacillati</taxon>
        <taxon>Bacillota</taxon>
        <taxon>Bacilli</taxon>
        <taxon>Bacillales</taxon>
        <taxon>Listeriaceae</taxon>
        <taxon>Listeria</taxon>
    </lineage>
</organism>
<name>Y208_LISWE</name>
<comment type="similarity">
    <text evidence="1">Belongs to the UPF0145 family.</text>
</comment>
<feature type="chain" id="PRO_0000138478" description="UPF0145 protein">
    <location>
        <begin position="1"/>
        <end position="110"/>
    </location>
</feature>